<organism>
    <name type="scientific">Clostridium perfringens (strain SM101 / Type A)</name>
    <dbReference type="NCBI Taxonomy" id="289380"/>
    <lineage>
        <taxon>Bacteria</taxon>
        <taxon>Bacillati</taxon>
        <taxon>Bacillota</taxon>
        <taxon>Clostridia</taxon>
        <taxon>Eubacteriales</taxon>
        <taxon>Clostridiaceae</taxon>
        <taxon>Clostridium</taxon>
    </lineage>
</organism>
<feature type="chain" id="PRO_0000300169" description="tRNA(Met) cytidine acetate ligase">
    <location>
        <begin position="1"/>
        <end position="402"/>
    </location>
</feature>
<feature type="binding site" evidence="1">
    <location>
        <begin position="7"/>
        <end position="20"/>
    </location>
    <ligand>
        <name>ATP</name>
        <dbReference type="ChEBI" id="CHEBI:30616"/>
    </ligand>
</feature>
<feature type="binding site" evidence="1">
    <location>
        <position position="102"/>
    </location>
    <ligand>
        <name>ATP</name>
        <dbReference type="ChEBI" id="CHEBI:30616"/>
    </ligand>
</feature>
<feature type="binding site" evidence="1">
    <location>
        <position position="171"/>
    </location>
    <ligand>
        <name>ATP</name>
        <dbReference type="ChEBI" id="CHEBI:30616"/>
    </ligand>
</feature>
<feature type="binding site" evidence="1">
    <location>
        <position position="196"/>
    </location>
    <ligand>
        <name>ATP</name>
        <dbReference type="ChEBI" id="CHEBI:30616"/>
    </ligand>
</feature>
<name>TMCAL_CLOPS</name>
<evidence type="ECO:0000255" key="1">
    <source>
        <dbReference type="HAMAP-Rule" id="MF_01539"/>
    </source>
</evidence>
<keyword id="KW-0067">ATP-binding</keyword>
<keyword id="KW-0963">Cytoplasm</keyword>
<keyword id="KW-0436">Ligase</keyword>
<keyword id="KW-0547">Nucleotide-binding</keyword>
<keyword id="KW-0694">RNA-binding</keyword>
<keyword id="KW-0819">tRNA processing</keyword>
<keyword id="KW-0820">tRNA-binding</keyword>
<dbReference type="EC" id="6.3.4.-" evidence="1"/>
<dbReference type="EMBL" id="CP000312">
    <property type="protein sequence ID" value="ABG85825.1"/>
    <property type="molecule type" value="Genomic_DNA"/>
</dbReference>
<dbReference type="RefSeq" id="WP_011592616.1">
    <property type="nucleotide sequence ID" value="NC_008262.1"/>
</dbReference>
<dbReference type="SMR" id="Q0SS95"/>
<dbReference type="KEGG" id="cpr:CPR_1697"/>
<dbReference type="BioCyc" id="CPER289380:GI76-1708-MONOMER"/>
<dbReference type="Proteomes" id="UP000001824">
    <property type="component" value="Chromosome"/>
</dbReference>
<dbReference type="GO" id="GO:0005737">
    <property type="term" value="C:cytoplasm"/>
    <property type="evidence" value="ECO:0007669"/>
    <property type="project" value="UniProtKB-SubCell"/>
</dbReference>
<dbReference type="GO" id="GO:0005524">
    <property type="term" value="F:ATP binding"/>
    <property type="evidence" value="ECO:0007669"/>
    <property type="project" value="UniProtKB-KW"/>
</dbReference>
<dbReference type="GO" id="GO:0016879">
    <property type="term" value="F:ligase activity, forming carbon-nitrogen bonds"/>
    <property type="evidence" value="ECO:0007669"/>
    <property type="project" value="UniProtKB-UniRule"/>
</dbReference>
<dbReference type="GO" id="GO:0000049">
    <property type="term" value="F:tRNA binding"/>
    <property type="evidence" value="ECO:0007669"/>
    <property type="project" value="UniProtKB-KW"/>
</dbReference>
<dbReference type="GO" id="GO:0006400">
    <property type="term" value="P:tRNA modification"/>
    <property type="evidence" value="ECO:0007669"/>
    <property type="project" value="UniProtKB-UniRule"/>
</dbReference>
<dbReference type="Gene3D" id="3.40.50.620">
    <property type="entry name" value="HUPs"/>
    <property type="match status" value="1"/>
</dbReference>
<dbReference type="HAMAP" id="MF_01539">
    <property type="entry name" value="TmcAL"/>
    <property type="match status" value="1"/>
</dbReference>
<dbReference type="InterPro" id="IPR014729">
    <property type="entry name" value="Rossmann-like_a/b/a_fold"/>
</dbReference>
<dbReference type="InterPro" id="IPR008513">
    <property type="entry name" value="tRNA(Met)_cyd_acetate_ligase"/>
</dbReference>
<dbReference type="NCBIfam" id="NF010191">
    <property type="entry name" value="PRK13670.1"/>
    <property type="match status" value="1"/>
</dbReference>
<dbReference type="PANTHER" id="PTHR37825">
    <property type="entry name" value="TRNA(MET) CYTIDINE ACETATE LIGASE"/>
    <property type="match status" value="1"/>
</dbReference>
<dbReference type="PANTHER" id="PTHR37825:SF1">
    <property type="entry name" value="TRNA(MET) CYTIDINE ACETATE LIGASE"/>
    <property type="match status" value="1"/>
</dbReference>
<dbReference type="Pfam" id="PF05636">
    <property type="entry name" value="HIGH_NTase1"/>
    <property type="match status" value="1"/>
</dbReference>
<dbReference type="SUPFAM" id="SSF52374">
    <property type="entry name" value="Nucleotidylyl transferase"/>
    <property type="match status" value="1"/>
</dbReference>
<accession>Q0SS95</accession>
<comment type="function">
    <text evidence="1">Catalyzes the formation of N(4)-acetylcytidine (ac(4)C) at the wobble position of elongator tRNA(Met), using acetate and ATP as substrates. First activates an acetate ion to form acetyladenylate (Ac-AMP) and then transfers the acetyl group to tRNA to form ac(4)C34.</text>
</comment>
<comment type="catalytic activity">
    <reaction evidence="1">
        <text>cytidine(34) in elongator tRNA(Met) + acetate + ATP = N(4)-acetylcytidine(34) in elongator tRNA(Met) + AMP + diphosphate</text>
        <dbReference type="Rhea" id="RHEA:58144"/>
        <dbReference type="Rhea" id="RHEA-COMP:10693"/>
        <dbReference type="Rhea" id="RHEA-COMP:10694"/>
        <dbReference type="ChEBI" id="CHEBI:30089"/>
        <dbReference type="ChEBI" id="CHEBI:30616"/>
        <dbReference type="ChEBI" id="CHEBI:33019"/>
        <dbReference type="ChEBI" id="CHEBI:74900"/>
        <dbReference type="ChEBI" id="CHEBI:82748"/>
        <dbReference type="ChEBI" id="CHEBI:456215"/>
    </reaction>
</comment>
<comment type="subcellular location">
    <subcellularLocation>
        <location evidence="1">Cytoplasm</location>
    </subcellularLocation>
</comment>
<comment type="similarity">
    <text evidence="1">Belongs to the TmcAL family.</text>
</comment>
<proteinExistence type="inferred from homology"/>
<reference key="1">
    <citation type="journal article" date="2006" name="Genome Res.">
        <title>Skewed genomic variability in strains of the toxigenic bacterial pathogen, Clostridium perfringens.</title>
        <authorList>
            <person name="Myers G.S.A."/>
            <person name="Rasko D.A."/>
            <person name="Cheung J.K."/>
            <person name="Ravel J."/>
            <person name="Seshadri R."/>
            <person name="DeBoy R.T."/>
            <person name="Ren Q."/>
            <person name="Varga J."/>
            <person name="Awad M.M."/>
            <person name="Brinkac L.M."/>
            <person name="Daugherty S.C."/>
            <person name="Haft D.H."/>
            <person name="Dodson R.J."/>
            <person name="Madupu R."/>
            <person name="Nelson W.C."/>
            <person name="Rosovitz M.J."/>
            <person name="Sullivan S.A."/>
            <person name="Khouri H."/>
            <person name="Dimitrov G.I."/>
            <person name="Watkins K.L."/>
            <person name="Mulligan S."/>
            <person name="Benton J."/>
            <person name="Radune D."/>
            <person name="Fisher D.J."/>
            <person name="Atkins H.S."/>
            <person name="Hiscox T."/>
            <person name="Jost B.H."/>
            <person name="Billington S.J."/>
            <person name="Songer J.G."/>
            <person name="McClane B.A."/>
            <person name="Titball R.W."/>
            <person name="Rood J.I."/>
            <person name="Melville S.B."/>
            <person name="Paulsen I.T."/>
        </authorList>
    </citation>
    <scope>NUCLEOTIDE SEQUENCE [LARGE SCALE GENOMIC DNA]</scope>
    <source>
        <strain>SM101 / Type A</strain>
    </source>
</reference>
<protein>
    <recommendedName>
        <fullName evidence="1">tRNA(Met) cytidine acetate ligase</fullName>
        <ecNumber evidence="1">6.3.4.-</ecNumber>
    </recommendedName>
</protein>
<sequence length="402" mass="45729">MNITGIITEYNPFHLGHELHLKNSKEITNCDGVICVMSGNFVQRGLPALTDKWTRTKMALEAGVDLVVELPTLFATSSAEFFAFGAVSLLNSLNVVNNICFGSECGDIDLIKKLSEIIVNEPPIFKEYLKDYLKEGLPFPKARSEALMKYLDYNNYKTDFSYLEKVLNSSNNILAIEYCKSLYKLQSTIKPFTIQRLGADYNDEELSKNEIASASAIRKSIYTSNIEESLDFMPEYSYNLLKNTSFSDLDKMFDLVKYAIVSNPNILKEIPEASEGIDNKIIQNIGKANSLDELINLCKSKRYSYTRLNRILCHILLNVNKDLLSLRKYSPNYVRILGFNNKGREILKEIKKNSEINIVNKLSKAKTDPLLEFDIKATNIYSFLNPSVKINSDYLISPIIFR</sequence>
<gene>
    <name evidence="1" type="primary">tmcAL</name>
    <name type="ordered locus">CPR_1697</name>
</gene>